<evidence type="ECO:0000255" key="1">
    <source>
        <dbReference type="HAMAP-Rule" id="MF_00111"/>
    </source>
</evidence>
<reference key="1">
    <citation type="journal article" date="2006" name="Genome Biol.">
        <title>Genomic analysis reveals that Pseudomonas aeruginosa virulence is combinatorial.</title>
        <authorList>
            <person name="Lee D.G."/>
            <person name="Urbach J.M."/>
            <person name="Wu G."/>
            <person name="Liberati N.T."/>
            <person name="Feinbaum R.L."/>
            <person name="Miyata S."/>
            <person name="Diggins L.T."/>
            <person name="He J."/>
            <person name="Saucier M."/>
            <person name="Deziel E."/>
            <person name="Friedman L."/>
            <person name="Li L."/>
            <person name="Grills G."/>
            <person name="Montgomery K."/>
            <person name="Kucherlapati R."/>
            <person name="Rahme L.G."/>
            <person name="Ausubel F.M."/>
        </authorList>
    </citation>
    <scope>NUCLEOTIDE SEQUENCE [LARGE SCALE GENOMIC DNA]</scope>
    <source>
        <strain>UCBPP-PA14</strain>
    </source>
</reference>
<name>MURA_PSEAB</name>
<feature type="chain" id="PRO_1000023072" description="UDP-N-acetylglucosamine 1-carboxyvinyltransferase">
    <location>
        <begin position="1"/>
        <end position="421"/>
    </location>
</feature>
<feature type="active site" description="Proton donor" evidence="1">
    <location>
        <position position="117"/>
    </location>
</feature>
<feature type="binding site" evidence="1">
    <location>
        <begin position="22"/>
        <end position="23"/>
    </location>
    <ligand>
        <name>phosphoenolpyruvate</name>
        <dbReference type="ChEBI" id="CHEBI:58702"/>
    </ligand>
</feature>
<feature type="binding site" evidence="1">
    <location>
        <position position="93"/>
    </location>
    <ligand>
        <name>UDP-N-acetyl-alpha-D-glucosamine</name>
        <dbReference type="ChEBI" id="CHEBI:57705"/>
    </ligand>
</feature>
<feature type="binding site" evidence="1">
    <location>
        <begin position="122"/>
        <end position="126"/>
    </location>
    <ligand>
        <name>UDP-N-acetyl-alpha-D-glucosamine</name>
        <dbReference type="ChEBI" id="CHEBI:57705"/>
    </ligand>
</feature>
<feature type="binding site" evidence="1">
    <location>
        <position position="308"/>
    </location>
    <ligand>
        <name>UDP-N-acetyl-alpha-D-glucosamine</name>
        <dbReference type="ChEBI" id="CHEBI:57705"/>
    </ligand>
</feature>
<feature type="binding site" evidence="1">
    <location>
        <position position="330"/>
    </location>
    <ligand>
        <name>UDP-N-acetyl-alpha-D-glucosamine</name>
        <dbReference type="ChEBI" id="CHEBI:57705"/>
    </ligand>
</feature>
<feature type="modified residue" description="2-(S-cysteinyl)pyruvic acid O-phosphothioketal" evidence="1">
    <location>
        <position position="117"/>
    </location>
</feature>
<comment type="function">
    <text evidence="1">Cell wall formation. Adds enolpyruvyl to UDP-N-acetylglucosamine.</text>
</comment>
<comment type="catalytic activity">
    <reaction evidence="1">
        <text>phosphoenolpyruvate + UDP-N-acetyl-alpha-D-glucosamine = UDP-N-acetyl-3-O-(1-carboxyvinyl)-alpha-D-glucosamine + phosphate</text>
        <dbReference type="Rhea" id="RHEA:18681"/>
        <dbReference type="ChEBI" id="CHEBI:43474"/>
        <dbReference type="ChEBI" id="CHEBI:57705"/>
        <dbReference type="ChEBI" id="CHEBI:58702"/>
        <dbReference type="ChEBI" id="CHEBI:68483"/>
        <dbReference type="EC" id="2.5.1.7"/>
    </reaction>
</comment>
<comment type="pathway">
    <text evidence="1">Cell wall biogenesis; peptidoglycan biosynthesis.</text>
</comment>
<comment type="subcellular location">
    <subcellularLocation>
        <location evidence="1">Cytoplasm</location>
    </subcellularLocation>
</comment>
<comment type="similarity">
    <text evidence="1">Belongs to the EPSP synthase family. MurA subfamily.</text>
</comment>
<keyword id="KW-0131">Cell cycle</keyword>
<keyword id="KW-0132">Cell division</keyword>
<keyword id="KW-0133">Cell shape</keyword>
<keyword id="KW-0961">Cell wall biogenesis/degradation</keyword>
<keyword id="KW-0963">Cytoplasm</keyword>
<keyword id="KW-0573">Peptidoglycan synthesis</keyword>
<keyword id="KW-0670">Pyruvate</keyword>
<keyword id="KW-0808">Transferase</keyword>
<dbReference type="EC" id="2.5.1.7" evidence="1"/>
<dbReference type="EMBL" id="CP000438">
    <property type="protein sequence ID" value="ABJ13718.1"/>
    <property type="molecule type" value="Genomic_DNA"/>
</dbReference>
<dbReference type="RefSeq" id="WP_003094332.1">
    <property type="nucleotide sequence ID" value="NZ_CP034244.1"/>
</dbReference>
<dbReference type="SMR" id="Q02GZ1"/>
<dbReference type="KEGG" id="pau:PA14_57810"/>
<dbReference type="PseudoCAP" id="PA14_57810"/>
<dbReference type="HOGENOM" id="CLU_027387_0_0_6"/>
<dbReference type="BioCyc" id="PAER208963:G1G74-4868-MONOMER"/>
<dbReference type="UniPathway" id="UPA00219"/>
<dbReference type="Proteomes" id="UP000000653">
    <property type="component" value="Chromosome"/>
</dbReference>
<dbReference type="GO" id="GO:0005737">
    <property type="term" value="C:cytoplasm"/>
    <property type="evidence" value="ECO:0007669"/>
    <property type="project" value="UniProtKB-SubCell"/>
</dbReference>
<dbReference type="GO" id="GO:0008760">
    <property type="term" value="F:UDP-N-acetylglucosamine 1-carboxyvinyltransferase activity"/>
    <property type="evidence" value="ECO:0007669"/>
    <property type="project" value="UniProtKB-UniRule"/>
</dbReference>
<dbReference type="GO" id="GO:0051301">
    <property type="term" value="P:cell division"/>
    <property type="evidence" value="ECO:0007669"/>
    <property type="project" value="UniProtKB-KW"/>
</dbReference>
<dbReference type="GO" id="GO:0071555">
    <property type="term" value="P:cell wall organization"/>
    <property type="evidence" value="ECO:0007669"/>
    <property type="project" value="UniProtKB-KW"/>
</dbReference>
<dbReference type="GO" id="GO:0009252">
    <property type="term" value="P:peptidoglycan biosynthetic process"/>
    <property type="evidence" value="ECO:0007669"/>
    <property type="project" value="UniProtKB-UniRule"/>
</dbReference>
<dbReference type="GO" id="GO:0008360">
    <property type="term" value="P:regulation of cell shape"/>
    <property type="evidence" value="ECO:0007669"/>
    <property type="project" value="UniProtKB-KW"/>
</dbReference>
<dbReference type="GO" id="GO:0019277">
    <property type="term" value="P:UDP-N-acetylgalactosamine biosynthetic process"/>
    <property type="evidence" value="ECO:0007669"/>
    <property type="project" value="InterPro"/>
</dbReference>
<dbReference type="CDD" id="cd01555">
    <property type="entry name" value="UdpNAET"/>
    <property type="match status" value="1"/>
</dbReference>
<dbReference type="FunFam" id="3.65.10.10:FF:000002">
    <property type="entry name" value="UDP-N-acetylglucosamine 1-carboxyvinyltransferase"/>
    <property type="match status" value="1"/>
</dbReference>
<dbReference type="Gene3D" id="3.65.10.10">
    <property type="entry name" value="Enolpyruvate transferase domain"/>
    <property type="match status" value="2"/>
</dbReference>
<dbReference type="HAMAP" id="MF_00111">
    <property type="entry name" value="MurA"/>
    <property type="match status" value="1"/>
</dbReference>
<dbReference type="InterPro" id="IPR001986">
    <property type="entry name" value="Enolpyruvate_Tfrase_dom"/>
</dbReference>
<dbReference type="InterPro" id="IPR036968">
    <property type="entry name" value="Enolpyruvate_Tfrase_sf"/>
</dbReference>
<dbReference type="InterPro" id="IPR050068">
    <property type="entry name" value="MurA_subfamily"/>
</dbReference>
<dbReference type="InterPro" id="IPR013792">
    <property type="entry name" value="RNA3'P_cycl/enolpyr_Trfase_a/b"/>
</dbReference>
<dbReference type="InterPro" id="IPR005750">
    <property type="entry name" value="UDP_GlcNAc_COvinyl_MurA"/>
</dbReference>
<dbReference type="NCBIfam" id="TIGR01072">
    <property type="entry name" value="murA"/>
    <property type="match status" value="1"/>
</dbReference>
<dbReference type="NCBIfam" id="NF006873">
    <property type="entry name" value="PRK09369.1"/>
    <property type="match status" value="1"/>
</dbReference>
<dbReference type="PANTHER" id="PTHR43783">
    <property type="entry name" value="UDP-N-ACETYLGLUCOSAMINE 1-CARBOXYVINYLTRANSFERASE"/>
    <property type="match status" value="1"/>
</dbReference>
<dbReference type="PANTHER" id="PTHR43783:SF1">
    <property type="entry name" value="UDP-N-ACETYLGLUCOSAMINE 1-CARBOXYVINYLTRANSFERASE"/>
    <property type="match status" value="1"/>
</dbReference>
<dbReference type="Pfam" id="PF00275">
    <property type="entry name" value="EPSP_synthase"/>
    <property type="match status" value="1"/>
</dbReference>
<dbReference type="SUPFAM" id="SSF55205">
    <property type="entry name" value="EPT/RTPC-like"/>
    <property type="match status" value="1"/>
</dbReference>
<accession>Q02GZ1</accession>
<protein>
    <recommendedName>
        <fullName evidence="1">UDP-N-acetylglucosamine 1-carboxyvinyltransferase</fullName>
        <ecNumber evidence="1">2.5.1.7</ecNumber>
    </recommendedName>
    <alternativeName>
        <fullName evidence="1">Enoylpyruvate transferase</fullName>
    </alternativeName>
    <alternativeName>
        <fullName evidence="1">UDP-N-acetylglucosamine enolpyruvyl transferase</fullName>
        <shortName evidence="1">EPT</shortName>
    </alternativeName>
</protein>
<organism>
    <name type="scientific">Pseudomonas aeruginosa (strain UCBPP-PA14)</name>
    <dbReference type="NCBI Taxonomy" id="208963"/>
    <lineage>
        <taxon>Bacteria</taxon>
        <taxon>Pseudomonadati</taxon>
        <taxon>Pseudomonadota</taxon>
        <taxon>Gammaproteobacteria</taxon>
        <taxon>Pseudomonadales</taxon>
        <taxon>Pseudomonadaceae</taxon>
        <taxon>Pseudomonas</taxon>
    </lineage>
</organism>
<sequence length="421" mass="44646">MDKLIITGGNRLDGEIRISGAKNSALPILAATLLADTPVTVCNLPHLHDITTMIELFGRMGVQPIIDEKLNVEVDASSIKTLVAPYELVKTMRASILVLGPMLARFGEAEVALPGGCAIGSRPVDLHIRGLEAMGAQIEVEGGYIKAKAPAGGLRGGHFFFDTVSVTGTENLMMAAALANGRTVLQNAAREPEVVDLANCLNAMGANVQGAGSDTIVIEGVKRLGGARYDVLPDRIETGTYLVAAAATGGRVKLKDTDPTILEAVLQKLEEAGAHISTGSNWIELDMKGNRPKAVNVRTAPYPAFPTDMQAQFISMNAVAEGTGAVIETVFENRFMHVYEMNRMGAQILVEGNTAIVTGVPKLKGAPVMATDLRASASLVIAGLVAEGDTLIDRIYHIDRGYECIEEKLQLLGAKIRRVPG</sequence>
<gene>
    <name evidence="1" type="primary">murA</name>
    <name type="ordered locus">PA14_57810</name>
</gene>
<proteinExistence type="inferred from homology"/>